<reference key="1">
    <citation type="journal article" date="2004" name="Biochimie">
        <title>Identification of promethin and PGLP as two novel up-regulated genes in PPARgamma1-induced adipogenic mouse liver.</title>
        <authorList>
            <person name="Yu S."/>
            <person name="Viswakarma N."/>
            <person name="Batra S.K."/>
            <person name="Sambasiva Rao M."/>
            <person name="Reddy J.K."/>
        </authorList>
    </citation>
    <scope>NUCLEOTIDE SEQUENCE [MRNA] (ISOFORM 1)</scope>
    <scope>TISSUE SPECIFICITY</scope>
    <scope>VARIANT ASP-154</scope>
    <source>
        <tissue>Heart</tissue>
    </source>
</reference>
<reference key="2">
    <citation type="journal article" date="2004" name="Nat. Genet.">
        <title>Complete sequencing and characterization of 21,243 full-length human cDNAs.</title>
        <authorList>
            <person name="Ota T."/>
            <person name="Suzuki Y."/>
            <person name="Nishikawa T."/>
            <person name="Otsuki T."/>
            <person name="Sugiyama T."/>
            <person name="Irie R."/>
            <person name="Wakamatsu A."/>
            <person name="Hayashi K."/>
            <person name="Sato H."/>
            <person name="Nagai K."/>
            <person name="Kimura K."/>
            <person name="Makita H."/>
            <person name="Sekine M."/>
            <person name="Obayashi M."/>
            <person name="Nishi T."/>
            <person name="Shibahara T."/>
            <person name="Tanaka T."/>
            <person name="Ishii S."/>
            <person name="Yamamoto J."/>
            <person name="Saito K."/>
            <person name="Kawai Y."/>
            <person name="Isono Y."/>
            <person name="Nakamura Y."/>
            <person name="Nagahari K."/>
            <person name="Murakami K."/>
            <person name="Yasuda T."/>
            <person name="Iwayanagi T."/>
            <person name="Wagatsuma M."/>
            <person name="Shiratori A."/>
            <person name="Sudo H."/>
            <person name="Hosoiri T."/>
            <person name="Kaku Y."/>
            <person name="Kodaira H."/>
            <person name="Kondo H."/>
            <person name="Sugawara M."/>
            <person name="Takahashi M."/>
            <person name="Kanda K."/>
            <person name="Yokoi T."/>
            <person name="Furuya T."/>
            <person name="Kikkawa E."/>
            <person name="Omura Y."/>
            <person name="Abe K."/>
            <person name="Kamihara K."/>
            <person name="Katsuta N."/>
            <person name="Sato K."/>
            <person name="Tanikawa M."/>
            <person name="Yamazaki M."/>
            <person name="Ninomiya K."/>
            <person name="Ishibashi T."/>
            <person name="Yamashita H."/>
            <person name="Murakawa K."/>
            <person name="Fujimori K."/>
            <person name="Tanai H."/>
            <person name="Kimata M."/>
            <person name="Watanabe M."/>
            <person name="Hiraoka S."/>
            <person name="Chiba Y."/>
            <person name="Ishida S."/>
            <person name="Ono Y."/>
            <person name="Takiguchi S."/>
            <person name="Watanabe S."/>
            <person name="Yosida M."/>
            <person name="Hotuta T."/>
            <person name="Kusano J."/>
            <person name="Kanehori K."/>
            <person name="Takahashi-Fujii A."/>
            <person name="Hara H."/>
            <person name="Tanase T.-O."/>
            <person name="Nomura Y."/>
            <person name="Togiya S."/>
            <person name="Komai F."/>
            <person name="Hara R."/>
            <person name="Takeuchi K."/>
            <person name="Arita M."/>
            <person name="Imose N."/>
            <person name="Musashino K."/>
            <person name="Yuuki H."/>
            <person name="Oshima A."/>
            <person name="Sasaki N."/>
            <person name="Aotsuka S."/>
            <person name="Yoshikawa Y."/>
            <person name="Matsunawa H."/>
            <person name="Ichihara T."/>
            <person name="Shiohata N."/>
            <person name="Sano S."/>
            <person name="Moriya S."/>
            <person name="Momiyama H."/>
            <person name="Satoh N."/>
            <person name="Takami S."/>
            <person name="Terashima Y."/>
            <person name="Suzuki O."/>
            <person name="Nakagawa S."/>
            <person name="Senoh A."/>
            <person name="Mizoguchi H."/>
            <person name="Goto Y."/>
            <person name="Shimizu F."/>
            <person name="Wakebe H."/>
            <person name="Hishigaki H."/>
            <person name="Watanabe T."/>
            <person name="Sugiyama A."/>
            <person name="Takemoto M."/>
            <person name="Kawakami B."/>
            <person name="Yamazaki M."/>
            <person name="Watanabe K."/>
            <person name="Kumagai A."/>
            <person name="Itakura S."/>
            <person name="Fukuzumi Y."/>
            <person name="Fujimori Y."/>
            <person name="Komiyama M."/>
            <person name="Tashiro H."/>
            <person name="Tanigami A."/>
            <person name="Fujiwara T."/>
            <person name="Ono T."/>
            <person name="Yamada K."/>
            <person name="Fujii Y."/>
            <person name="Ozaki K."/>
            <person name="Hirao M."/>
            <person name="Ohmori Y."/>
            <person name="Kawabata A."/>
            <person name="Hikiji T."/>
            <person name="Kobatake N."/>
            <person name="Inagaki H."/>
            <person name="Ikema Y."/>
            <person name="Okamoto S."/>
            <person name="Okitani R."/>
            <person name="Kawakami T."/>
            <person name="Noguchi S."/>
            <person name="Itoh T."/>
            <person name="Shigeta K."/>
            <person name="Senba T."/>
            <person name="Matsumura K."/>
            <person name="Nakajima Y."/>
            <person name="Mizuno T."/>
            <person name="Morinaga M."/>
            <person name="Sasaki M."/>
            <person name="Togashi T."/>
            <person name="Oyama M."/>
            <person name="Hata H."/>
            <person name="Watanabe M."/>
            <person name="Komatsu T."/>
            <person name="Mizushima-Sugano J."/>
            <person name="Satoh T."/>
            <person name="Shirai Y."/>
            <person name="Takahashi Y."/>
            <person name="Nakagawa K."/>
            <person name="Okumura K."/>
            <person name="Nagase T."/>
            <person name="Nomura N."/>
            <person name="Kikuchi H."/>
            <person name="Masuho Y."/>
            <person name="Yamashita R."/>
            <person name="Nakai K."/>
            <person name="Yada T."/>
            <person name="Nakamura Y."/>
            <person name="Ohara O."/>
            <person name="Isogai T."/>
            <person name="Sugano S."/>
        </authorList>
    </citation>
    <scope>NUCLEOTIDE SEQUENCE [LARGE SCALE MRNA] (ISOFORMS 1 AND 2)</scope>
    <scope>VARIANT ASP-154</scope>
    <source>
        <tissue>Cerebellum</tissue>
        <tissue>Mammary gland</tissue>
    </source>
</reference>
<reference key="3">
    <citation type="journal article" date="1999" name="Genomics">
        <title>Genome duplications and other features in 12 Mb of DNA sequence from human chromosome 16p and 16q.</title>
        <authorList>
            <person name="Loftus B.J."/>
            <person name="Kim U.-J."/>
            <person name="Sneddon V.P."/>
            <person name="Kalush F."/>
            <person name="Brandon R."/>
            <person name="Fuhrmann J."/>
            <person name="Mason T."/>
            <person name="Crosby M.L."/>
            <person name="Barnstead M."/>
            <person name="Cronin L."/>
            <person name="Mays A.D."/>
            <person name="Cao Y."/>
            <person name="Xu R.X."/>
            <person name="Kang H.-L."/>
            <person name="Mitchell S."/>
            <person name="Eichler E.E."/>
            <person name="Harris P.C."/>
            <person name="Venter J.C."/>
            <person name="Adams M.D."/>
        </authorList>
    </citation>
    <scope>NUCLEOTIDE SEQUENCE [LARGE SCALE GENOMIC DNA]</scope>
</reference>
<reference key="4">
    <citation type="journal article" date="2004" name="Nature">
        <title>The sequence and analysis of duplication-rich human chromosome 16.</title>
        <authorList>
            <person name="Martin J."/>
            <person name="Han C."/>
            <person name="Gordon L.A."/>
            <person name="Terry A."/>
            <person name="Prabhakar S."/>
            <person name="She X."/>
            <person name="Xie G."/>
            <person name="Hellsten U."/>
            <person name="Chan Y.M."/>
            <person name="Altherr M."/>
            <person name="Couronne O."/>
            <person name="Aerts A."/>
            <person name="Bajorek E."/>
            <person name="Black S."/>
            <person name="Blumer H."/>
            <person name="Branscomb E."/>
            <person name="Brown N.C."/>
            <person name="Bruno W.J."/>
            <person name="Buckingham J.M."/>
            <person name="Callen D.F."/>
            <person name="Campbell C.S."/>
            <person name="Campbell M.L."/>
            <person name="Campbell E.W."/>
            <person name="Caoile C."/>
            <person name="Challacombe J.F."/>
            <person name="Chasteen L.A."/>
            <person name="Chertkov O."/>
            <person name="Chi H.C."/>
            <person name="Christensen M."/>
            <person name="Clark L.M."/>
            <person name="Cohn J.D."/>
            <person name="Denys M."/>
            <person name="Detter J.C."/>
            <person name="Dickson M."/>
            <person name="Dimitrijevic-Bussod M."/>
            <person name="Escobar J."/>
            <person name="Fawcett J.J."/>
            <person name="Flowers D."/>
            <person name="Fotopulos D."/>
            <person name="Glavina T."/>
            <person name="Gomez M."/>
            <person name="Gonzales E."/>
            <person name="Goodstein D."/>
            <person name="Goodwin L.A."/>
            <person name="Grady D.L."/>
            <person name="Grigoriev I."/>
            <person name="Groza M."/>
            <person name="Hammon N."/>
            <person name="Hawkins T."/>
            <person name="Haydu L."/>
            <person name="Hildebrand C.E."/>
            <person name="Huang W."/>
            <person name="Israni S."/>
            <person name="Jett J."/>
            <person name="Jewett P.B."/>
            <person name="Kadner K."/>
            <person name="Kimball H."/>
            <person name="Kobayashi A."/>
            <person name="Krawczyk M.-C."/>
            <person name="Leyba T."/>
            <person name="Longmire J.L."/>
            <person name="Lopez F."/>
            <person name="Lou Y."/>
            <person name="Lowry S."/>
            <person name="Ludeman T."/>
            <person name="Manohar C.F."/>
            <person name="Mark G.A."/>
            <person name="McMurray K.L."/>
            <person name="Meincke L.J."/>
            <person name="Morgan J."/>
            <person name="Moyzis R.K."/>
            <person name="Mundt M.O."/>
            <person name="Munk A.C."/>
            <person name="Nandkeshwar R.D."/>
            <person name="Pitluck S."/>
            <person name="Pollard M."/>
            <person name="Predki P."/>
            <person name="Parson-Quintana B."/>
            <person name="Ramirez L."/>
            <person name="Rash S."/>
            <person name="Retterer J."/>
            <person name="Ricke D.O."/>
            <person name="Robinson D.L."/>
            <person name="Rodriguez A."/>
            <person name="Salamov A."/>
            <person name="Saunders E.H."/>
            <person name="Scott D."/>
            <person name="Shough T."/>
            <person name="Stallings R.L."/>
            <person name="Stalvey M."/>
            <person name="Sutherland R.D."/>
            <person name="Tapia R."/>
            <person name="Tesmer J.G."/>
            <person name="Thayer N."/>
            <person name="Thompson L.S."/>
            <person name="Tice H."/>
            <person name="Torney D.C."/>
            <person name="Tran-Gyamfi M."/>
            <person name="Tsai M."/>
            <person name="Ulanovsky L.E."/>
            <person name="Ustaszewska A."/>
            <person name="Vo N."/>
            <person name="White P.S."/>
            <person name="Williams A.L."/>
            <person name="Wills P.L."/>
            <person name="Wu J.-R."/>
            <person name="Wu K."/>
            <person name="Yang J."/>
            <person name="DeJong P."/>
            <person name="Bruce D."/>
            <person name="Doggett N.A."/>
            <person name="Deaven L."/>
            <person name="Schmutz J."/>
            <person name="Grimwood J."/>
            <person name="Richardson P."/>
            <person name="Rokhsar D.S."/>
            <person name="Eichler E.E."/>
            <person name="Gilna P."/>
            <person name="Lucas S.M."/>
            <person name="Myers R.M."/>
            <person name="Rubin E.M."/>
            <person name="Pennacchio L.A."/>
        </authorList>
    </citation>
    <scope>NUCLEOTIDE SEQUENCE [LARGE SCALE GENOMIC DNA]</scope>
</reference>
<reference key="5">
    <citation type="journal article" date="2004" name="Genome Res.">
        <title>The status, quality, and expansion of the NIH full-length cDNA project: the Mammalian Gene Collection (MGC).</title>
        <authorList>
            <consortium name="The MGC Project Team"/>
        </authorList>
    </citation>
    <scope>NUCLEOTIDE SEQUENCE [LARGE SCALE MRNA] (ISOFORM 1)</scope>
    <scope>VARIANT SER-107</scope>
    <source>
        <tissue>Skin</tissue>
    </source>
</reference>
<reference key="6">
    <citation type="journal article" date="2012" name="Proc. Natl. Acad. Sci. U.S.A.">
        <title>N-terminal acetylome analyses and functional insights of the N-terminal acetyltransferase NatB.</title>
        <authorList>
            <person name="Van Damme P."/>
            <person name="Lasa M."/>
            <person name="Polevoda B."/>
            <person name="Gazquez C."/>
            <person name="Elosegui-Artola A."/>
            <person name="Kim D.S."/>
            <person name="De Juan-Pardo E."/>
            <person name="Demeyer K."/>
            <person name="Hole K."/>
            <person name="Larrea E."/>
            <person name="Timmerman E."/>
            <person name="Prieto J."/>
            <person name="Arnesen T."/>
            <person name="Sherman F."/>
            <person name="Gevaert K."/>
            <person name="Aldabe R."/>
        </authorList>
    </citation>
    <scope>IDENTIFICATION BY MASS SPECTROMETRY [LARGE SCALE ANALYSIS]</scope>
</reference>
<reference key="7">
    <citation type="journal article" date="2019" name="Cells">
        <title>Promethin Is a Conserved Seipin Partner Protein.</title>
        <authorList>
            <person name="Castro I.G."/>
            <person name="Eisenberg-Bord M."/>
            <person name="Persiani E."/>
            <person name="Rochford J.J."/>
            <person name="Schuldiner M."/>
            <person name="Bohnert M."/>
        </authorList>
    </citation>
    <scope>INTERACTION WITH BSCL2</scope>
    <scope>SUBCELLULAR LOCATION</scope>
</reference>
<reference key="8">
    <citation type="journal article" date="2019" name="Dev. Cell">
        <title>LDAF1 and Seipin Form a Lipid Droplet Assembly Complex.</title>
        <authorList>
            <person name="Chung J."/>
            <person name="Wu X."/>
            <person name="Lambert T.J."/>
            <person name="Lai Z.W."/>
            <person name="Walther T.C."/>
            <person name="Farese R.V. Jr."/>
        </authorList>
    </citation>
    <scope>FUNCTION</scope>
    <scope>SUBCELLULAR LOCATION</scope>
    <scope>INTERACTION WITH BSCL2</scope>
    <scope>TOPOLOGY</scope>
</reference>
<sequence length="161" mass="17522">MAKEEPQSISRDLQELQKKLSLLIDSFQNNSKVVAFMKSPVGQYLDSHPFLAFTLLVFIVMSAVPVGFFLLIVVLTTLAALLGVIILEGLVISVGGFSLLCILCGLGFVSLAMSGMMIASYVVVSSLISCWFSPRPLTQQNTSCDFLPAMKSAEFEGLYQE</sequence>
<protein>
    <recommendedName>
        <fullName evidence="10">Lipid droplet assembly factor 1</fullName>
    </recommendedName>
    <alternativeName>
        <fullName evidence="8 9">Promethin</fullName>
    </alternativeName>
    <alternativeName>
        <fullName>Transmembrane protein 159</fullName>
    </alternativeName>
</protein>
<dbReference type="EMBL" id="AY212918">
    <property type="protein sequence ID" value="AAO52682.1"/>
    <property type="molecule type" value="mRNA"/>
</dbReference>
<dbReference type="EMBL" id="AK074667">
    <property type="protein sequence ID" value="BAC11122.1"/>
    <property type="molecule type" value="mRNA"/>
</dbReference>
<dbReference type="EMBL" id="AK293557">
    <property type="protein sequence ID" value="BAG57032.1"/>
    <property type="molecule type" value="mRNA"/>
</dbReference>
<dbReference type="EMBL" id="AF001550">
    <property type="protein sequence ID" value="AAB67598.1"/>
    <property type="molecule type" value="Genomic_DNA"/>
</dbReference>
<dbReference type="EMBL" id="AC008551">
    <property type="status" value="NOT_ANNOTATED_CDS"/>
    <property type="molecule type" value="Genomic_DNA"/>
</dbReference>
<dbReference type="EMBL" id="BC015812">
    <property type="protein sequence ID" value="AAH15812.1"/>
    <property type="molecule type" value="mRNA"/>
</dbReference>
<dbReference type="CCDS" id="CCDS10595.1">
    <molecule id="Q96B96-1"/>
</dbReference>
<dbReference type="CCDS" id="CCDS76841.1">
    <molecule id="Q96B96-2"/>
</dbReference>
<dbReference type="RefSeq" id="NP_001288698.1">
    <molecule id="Q96B96-1"/>
    <property type="nucleotide sequence ID" value="NM_001301769.2"/>
</dbReference>
<dbReference type="RefSeq" id="NP_001288700.1">
    <molecule id="Q96B96-1"/>
    <property type="nucleotide sequence ID" value="NM_001301771.2"/>
</dbReference>
<dbReference type="RefSeq" id="NP_001288702.1">
    <property type="nucleotide sequence ID" value="NM_001301773.1"/>
</dbReference>
<dbReference type="RefSeq" id="NP_001288703.1">
    <property type="nucleotide sequence ID" value="NM_001301774.1"/>
</dbReference>
<dbReference type="RefSeq" id="NP_001288704.1">
    <molecule id="Q96B96-2"/>
    <property type="nucleotide sequence ID" value="NM_001301775.2"/>
</dbReference>
<dbReference type="RefSeq" id="NP_065155.3">
    <molecule id="Q96B96-1"/>
    <property type="nucleotide sequence ID" value="NM_020422.5"/>
</dbReference>
<dbReference type="RefSeq" id="XP_005255496.1">
    <property type="nucleotide sequence ID" value="XM_005255439.4"/>
</dbReference>
<dbReference type="RefSeq" id="XP_006721129.1">
    <molecule id="Q96B96-2"/>
    <property type="nucleotide sequence ID" value="XM_006721066.3"/>
</dbReference>
<dbReference type="SMR" id="Q96B96"/>
<dbReference type="BioGRID" id="121403">
    <property type="interactions" value="65"/>
</dbReference>
<dbReference type="FunCoup" id="Q96B96">
    <property type="interactions" value="172"/>
</dbReference>
<dbReference type="IntAct" id="Q96B96">
    <property type="interactions" value="46"/>
</dbReference>
<dbReference type="MINT" id="Q96B96"/>
<dbReference type="STRING" id="9606.ENSP00000409879"/>
<dbReference type="iPTMnet" id="Q96B96"/>
<dbReference type="PhosphoSitePlus" id="Q96B96"/>
<dbReference type="SwissPalm" id="Q96B96"/>
<dbReference type="BioMuta" id="TMEM159"/>
<dbReference type="DMDM" id="313104024"/>
<dbReference type="jPOST" id="Q96B96"/>
<dbReference type="MassIVE" id="Q96B96"/>
<dbReference type="PaxDb" id="9606-ENSP00000233047"/>
<dbReference type="PeptideAtlas" id="Q96B96"/>
<dbReference type="ProteomicsDB" id="3940"/>
<dbReference type="ProteomicsDB" id="76056">
    <molecule id="Q96B96-1"/>
</dbReference>
<dbReference type="Pumba" id="Q96B96"/>
<dbReference type="Antibodypedia" id="3080">
    <property type="antibodies" value="32 antibodies from 10 providers"/>
</dbReference>
<dbReference type="DNASU" id="57146"/>
<dbReference type="Ensembl" id="ENST00000233047.9">
    <molecule id="Q96B96-1"/>
    <property type="protein sequence ID" value="ENSP00000233047.4"/>
    <property type="gene ID" value="ENSG00000011638.11"/>
</dbReference>
<dbReference type="Ensembl" id="ENST00000261388.7">
    <molecule id="Q96B96-1"/>
    <property type="protein sequence ID" value="ENSP00000261388.3"/>
    <property type="gene ID" value="ENSG00000011638.11"/>
</dbReference>
<dbReference type="Ensembl" id="ENST00000451578.6">
    <molecule id="Q96B96-2"/>
    <property type="protein sequence ID" value="ENSP00000409879.2"/>
    <property type="gene ID" value="ENSG00000011638.11"/>
</dbReference>
<dbReference type="Ensembl" id="ENST00000572599.5">
    <molecule id="Q96B96-1"/>
    <property type="protein sequence ID" value="ENSP00000460687.1"/>
    <property type="gene ID" value="ENSG00000011638.11"/>
</dbReference>
<dbReference type="GeneID" id="57146"/>
<dbReference type="KEGG" id="hsa:57146"/>
<dbReference type="MANE-Select" id="ENST00000233047.9">
    <property type="protein sequence ID" value="ENSP00000233047.4"/>
    <property type="RefSeq nucleotide sequence ID" value="NM_001301771.2"/>
    <property type="RefSeq protein sequence ID" value="NP_001288700.1"/>
</dbReference>
<dbReference type="UCSC" id="uc002dif.5">
    <molecule id="Q96B96-1"/>
    <property type="organism name" value="human"/>
</dbReference>
<dbReference type="AGR" id="HGNC:30136"/>
<dbReference type="CTD" id="57146"/>
<dbReference type="DisGeNET" id="57146"/>
<dbReference type="GeneCards" id="LDAF1"/>
<dbReference type="HGNC" id="HGNC:30136">
    <property type="gene designation" value="LDAF1"/>
</dbReference>
<dbReference type="HPA" id="ENSG00000011638">
    <property type="expression patterns" value="Low tissue specificity"/>
</dbReference>
<dbReference type="MIM" id="611304">
    <property type="type" value="gene"/>
</dbReference>
<dbReference type="neXtProt" id="NX_Q96B96"/>
<dbReference type="OpenTargets" id="ENSG00000011638"/>
<dbReference type="VEuPathDB" id="HostDB:ENSG00000011638"/>
<dbReference type="eggNOG" id="ENOG502S3TB">
    <property type="taxonomic scope" value="Eukaryota"/>
</dbReference>
<dbReference type="GeneTree" id="ENSGT00390000006420"/>
<dbReference type="InParanoid" id="Q96B96"/>
<dbReference type="OMA" id="VNYWFPP"/>
<dbReference type="PAN-GO" id="Q96B96">
    <property type="GO annotations" value="0 GO annotations based on evolutionary models"/>
</dbReference>
<dbReference type="PhylomeDB" id="Q96B96"/>
<dbReference type="TreeFam" id="TF335782"/>
<dbReference type="PathwayCommons" id="Q96B96"/>
<dbReference type="SignaLink" id="Q96B96"/>
<dbReference type="BioGRID-ORCS" id="57146">
    <property type="hits" value="11 hits in 1158 CRISPR screens"/>
</dbReference>
<dbReference type="ChiTaRS" id="TMEM159">
    <property type="organism name" value="human"/>
</dbReference>
<dbReference type="GenomeRNAi" id="57146"/>
<dbReference type="Pharos" id="Q96B96">
    <property type="development level" value="Tdark"/>
</dbReference>
<dbReference type="PRO" id="PR:Q96B96"/>
<dbReference type="Proteomes" id="UP000005640">
    <property type="component" value="Chromosome 16"/>
</dbReference>
<dbReference type="RNAct" id="Q96B96">
    <property type="molecule type" value="protein"/>
</dbReference>
<dbReference type="Bgee" id="ENSG00000011638">
    <property type="expression patterns" value="Expressed in skin of leg and 107 other cell types or tissues"/>
</dbReference>
<dbReference type="ExpressionAtlas" id="Q96B96">
    <property type="expression patterns" value="baseline and differential"/>
</dbReference>
<dbReference type="GO" id="GO:0005789">
    <property type="term" value="C:endoplasmic reticulum membrane"/>
    <property type="evidence" value="ECO:0000314"/>
    <property type="project" value="UniProtKB"/>
</dbReference>
<dbReference type="GO" id="GO:0005811">
    <property type="term" value="C:lipid droplet"/>
    <property type="evidence" value="ECO:0000314"/>
    <property type="project" value="UniProtKB"/>
</dbReference>
<dbReference type="GO" id="GO:0140042">
    <property type="term" value="P:lipid droplet formation"/>
    <property type="evidence" value="ECO:0000315"/>
    <property type="project" value="UniProtKB"/>
</dbReference>
<dbReference type="InterPro" id="IPR029709">
    <property type="entry name" value="LDAF1"/>
</dbReference>
<dbReference type="PANTHER" id="PTHR14275:SF0">
    <property type="entry name" value="LIPID DROPLET ASSEMBLY FACTOR 1"/>
    <property type="match status" value="1"/>
</dbReference>
<dbReference type="PANTHER" id="PTHR14275">
    <property type="entry name" value="PROMETHIN"/>
    <property type="match status" value="1"/>
</dbReference>
<dbReference type="Pfam" id="PF16015">
    <property type="entry name" value="Promethin"/>
    <property type="match status" value="1"/>
</dbReference>
<feature type="chain" id="PRO_0000279535" description="Lipid droplet assembly factor 1">
    <location>
        <begin position="1"/>
        <end position="161"/>
    </location>
</feature>
<feature type="topological domain" description="Cytoplasmic" evidence="6">
    <location>
        <begin position="1"/>
        <end position="43"/>
    </location>
</feature>
<feature type="transmembrane region" description="Helical" evidence="1">
    <location>
        <begin position="44"/>
        <end position="61"/>
    </location>
</feature>
<feature type="topological domain" description="Lumenal" evidence="6">
    <location>
        <begin position="62"/>
        <end position="67"/>
    </location>
</feature>
<feature type="transmembrane region" description="Helical" evidence="1">
    <location>
        <begin position="68"/>
        <end position="87"/>
    </location>
</feature>
<feature type="topological domain" description="Cytoplasmic" evidence="6">
    <location>
        <begin position="88"/>
        <end position="93"/>
    </location>
</feature>
<feature type="transmembrane region" description="Helical" evidence="1">
    <location>
        <begin position="94"/>
        <end position="110"/>
    </location>
</feature>
<feature type="topological domain" description="Lumenal" evidence="6">
    <location>
        <begin position="111"/>
        <end position="116"/>
    </location>
</feature>
<feature type="transmembrane region" description="Helical" evidence="1">
    <location>
        <begin position="117"/>
        <end position="133"/>
    </location>
</feature>
<feature type="topological domain" description="Cytoplasmic" evidence="6">
    <location>
        <begin position="134"/>
        <end position="161"/>
    </location>
</feature>
<feature type="splice variant" id="VSP_056078" description="In isoform 2." evidence="7">
    <original>N</original>
    <variation>NSKLPQHSRISLDSDDGVSRLGSAG</variation>
    <location>
        <position position="30"/>
    </location>
</feature>
<feature type="sequence variant" id="VAR_057765" description="In dbSNP:rs35345508.">
    <original>F</original>
    <variation>L</variation>
    <location>
        <position position="97"/>
    </location>
</feature>
<feature type="sequence variant" id="VAR_030923" description="In dbSNP:rs1046480." evidence="3">
    <original>G</original>
    <variation>S</variation>
    <location>
        <position position="107"/>
    </location>
</feature>
<feature type="sequence variant" id="VAR_030924" description="In dbSNP:rs1063087." evidence="2 4">
    <original>E</original>
    <variation>D</variation>
    <location>
        <position position="154"/>
    </location>
</feature>
<comment type="function">
    <text evidence="6">Plays an important role in the formation of lipid droplets (LD) which are storage organelles at the center of lipid and energy homeostasis (PubMed:31708432). In association with BSCL2/seipin, defines the sites of LD formation in the endoplasmic reticulum (PubMed:31708432).</text>
</comment>
<comment type="subunit">
    <text evidence="5 6">Interacts with isoform 1 and isoform 3 of BSCL2/seipin to form an oligomeric complex.</text>
</comment>
<comment type="interaction">
    <interactant intactId="EBI-7055862">
        <id>Q96B96</id>
    </interactant>
    <interactant intactId="EBI-8652492">
        <id>Q9UGQ2</id>
        <label>CACFD1</label>
    </interactant>
    <organismsDiffer>false</organismsDiffer>
    <experiments>4</experiments>
</comment>
<comment type="interaction">
    <interactant intactId="EBI-7055862">
        <id>Q96B96</id>
    </interactant>
    <interactant intactId="EBI-745535">
        <id>Q8NI60</id>
        <label>COQ8A</label>
    </interactant>
    <organismsDiffer>false</organismsDiffer>
    <experiments>8</experiments>
</comment>
<comment type="interaction">
    <interactant intactId="EBI-7055862">
        <id>Q96B96</id>
    </interactant>
    <interactant intactId="EBI-9304251">
        <id>Q05329</id>
        <label>GAD2</label>
    </interactant>
    <organismsDiffer>false</organismsDiffer>
    <experiments>6</experiments>
</comment>
<comment type="interaction">
    <interactant intactId="EBI-7055862">
        <id>Q96B96</id>
    </interactant>
    <interactant intactId="EBI-16432654">
        <id>A8MRB1</id>
        <label>S100B</label>
    </interactant>
    <organismsDiffer>false</organismsDiffer>
    <experiments>3</experiments>
</comment>
<comment type="interaction">
    <interactant intactId="EBI-7055862">
        <id>Q96B96</id>
    </interactant>
    <interactant intactId="EBI-8652744">
        <id>Q96IW7</id>
        <label>SEC22A</label>
    </interactant>
    <organismsDiffer>false</organismsDiffer>
    <experiments>3</experiments>
</comment>
<comment type="interaction">
    <interactant intactId="EBI-7055862">
        <id>Q96B96</id>
    </interactant>
    <interactant intactId="EBI-1222191">
        <id>Q6P1K1</id>
        <label>SLC48A1</label>
    </interactant>
    <organismsDiffer>false</organismsDiffer>
    <experiments>3</experiments>
</comment>
<comment type="interaction">
    <interactant intactId="EBI-7055862">
        <id>Q96B96</id>
    </interactant>
    <interactant intactId="EBI-10238936">
        <id>Q17RD7</id>
        <label>SYT16</label>
    </interactant>
    <organismsDiffer>false</organismsDiffer>
    <experiments>3</experiments>
</comment>
<comment type="interaction">
    <interactant intactId="EBI-7055862">
        <id>Q96B96</id>
    </interactant>
    <interactant intactId="EBI-741829">
        <id>Q96HH6</id>
        <label>TMEM19</label>
    </interactant>
    <organismsDiffer>false</organismsDiffer>
    <experiments>3</experiments>
</comment>
<comment type="subcellular location">
    <subcellularLocation>
        <location evidence="5 6">Endoplasmic reticulum membrane</location>
        <topology evidence="1">Multi-pass membrane protein</topology>
    </subcellularLocation>
    <subcellularLocation>
        <location evidence="5 6">Lipid droplet</location>
    </subcellularLocation>
    <text evidence="6">Co-localizes with BSCL2/seipin in the ER, upon LD formation dissociates from BSCL2/seipin and relocalizes to LD surfaces during LD maturation.</text>
</comment>
<comment type="alternative products">
    <event type="alternative splicing"/>
    <isoform>
        <id>Q96B96-1</id>
        <name>1</name>
        <sequence type="displayed"/>
    </isoform>
    <isoform>
        <id>Q96B96-2</id>
        <name>2</name>
        <sequence type="described" ref="VSP_056078"/>
    </isoform>
</comment>
<comment type="tissue specificity">
    <text evidence="4">Expressed at high levels in the heart and skeletal muscle. Expressed at low levels in kidney, small intestine, lung and liver.</text>
</comment>
<comment type="similarity">
    <text evidence="11">Belongs to the LDAF1 family.</text>
</comment>
<accession>Q96B96</accession>
<accession>A6NMA9</accession>
<accession>B4DEC1</accession>
<accession>O00323</accession>
<gene>
    <name evidence="12" type="primary">LDAF1</name>
    <name type="synonym">TMEM159</name>
</gene>
<evidence type="ECO:0000255" key="1"/>
<evidence type="ECO:0000269" key="2">
    <source>
    </source>
</evidence>
<evidence type="ECO:0000269" key="3">
    <source>
    </source>
</evidence>
<evidence type="ECO:0000269" key="4">
    <source>
    </source>
</evidence>
<evidence type="ECO:0000269" key="5">
    <source>
    </source>
</evidence>
<evidence type="ECO:0000269" key="6">
    <source>
    </source>
</evidence>
<evidence type="ECO:0000303" key="7">
    <source>
    </source>
</evidence>
<evidence type="ECO:0000303" key="8">
    <source>
    </source>
</evidence>
<evidence type="ECO:0000303" key="9">
    <source>
    </source>
</evidence>
<evidence type="ECO:0000303" key="10">
    <source>
    </source>
</evidence>
<evidence type="ECO:0000305" key="11"/>
<evidence type="ECO:0000312" key="12">
    <source>
        <dbReference type="HGNC" id="HGNC:30136"/>
    </source>
</evidence>
<name>LDAF1_HUMAN</name>
<organism>
    <name type="scientific">Homo sapiens</name>
    <name type="common">Human</name>
    <dbReference type="NCBI Taxonomy" id="9606"/>
    <lineage>
        <taxon>Eukaryota</taxon>
        <taxon>Metazoa</taxon>
        <taxon>Chordata</taxon>
        <taxon>Craniata</taxon>
        <taxon>Vertebrata</taxon>
        <taxon>Euteleostomi</taxon>
        <taxon>Mammalia</taxon>
        <taxon>Eutheria</taxon>
        <taxon>Euarchontoglires</taxon>
        <taxon>Primates</taxon>
        <taxon>Haplorrhini</taxon>
        <taxon>Catarrhini</taxon>
        <taxon>Hominidae</taxon>
        <taxon>Homo</taxon>
    </lineage>
</organism>
<keyword id="KW-0025">Alternative splicing</keyword>
<keyword id="KW-0256">Endoplasmic reticulum</keyword>
<keyword id="KW-0551">Lipid droplet</keyword>
<keyword id="KW-0472">Membrane</keyword>
<keyword id="KW-1267">Proteomics identification</keyword>
<keyword id="KW-1185">Reference proteome</keyword>
<keyword id="KW-0812">Transmembrane</keyword>
<keyword id="KW-1133">Transmembrane helix</keyword>
<proteinExistence type="evidence at protein level"/>